<organism>
    <name type="scientific">Struthio camelus</name>
    <name type="common">Common ostrich</name>
    <dbReference type="NCBI Taxonomy" id="8801"/>
    <lineage>
        <taxon>Eukaryota</taxon>
        <taxon>Metazoa</taxon>
        <taxon>Chordata</taxon>
        <taxon>Craniata</taxon>
        <taxon>Vertebrata</taxon>
        <taxon>Euteleostomi</taxon>
        <taxon>Archelosauria</taxon>
        <taxon>Archosauria</taxon>
        <taxon>Dinosauria</taxon>
        <taxon>Saurischia</taxon>
        <taxon>Theropoda</taxon>
        <taxon>Coelurosauria</taxon>
        <taxon>Aves</taxon>
        <taxon>Palaeognathae</taxon>
        <taxon>Struthioniformes</taxon>
        <taxon>Struthionidae</taxon>
        <taxon>Struthio</taxon>
    </lineage>
</organism>
<proteinExistence type="inferred from homology"/>
<accession>Q35813</accession>
<protein>
    <recommendedName>
        <fullName>NADH-ubiquinone oxidoreductase chain 5</fullName>
        <ecNumber>7.1.1.2</ecNumber>
    </recommendedName>
    <alternativeName>
        <fullName>NADH dehydrogenase subunit 5</fullName>
    </alternativeName>
</protein>
<reference key="1">
    <citation type="journal article" date="1997" name="Mol. Biol. Evol.">
        <title>The mtDNA sequence of the ostrich and the divergence between paleognathous and neognathous birds.</title>
        <authorList>
            <person name="Harlid A."/>
            <person name="Janke A."/>
            <person name="Arnason U."/>
        </authorList>
    </citation>
    <scope>NUCLEOTIDE SEQUENCE [GENOMIC DNA]</scope>
</reference>
<reference key="2">
    <citation type="journal article" date="2001" name="Proc. R. Soc. B">
        <title>Complete mitochondrial DNA genome sequences of extinct birds: ratite phylogenetics and the vicariance biogeography hypothesis.</title>
        <authorList>
            <person name="Haddrath O."/>
            <person name="Baker A.J."/>
        </authorList>
    </citation>
    <scope>NUCLEOTIDE SEQUENCE [GENOMIC DNA]</scope>
</reference>
<reference key="3">
    <citation type="journal article" date="1995" name="Mol. Biol. Evol.">
        <title>Variations in mitochondrial tRNA gene organization of reptiles as phylogenetic markers.</title>
        <authorList>
            <person name="Kumazawa Y."/>
            <person name="Nishida M."/>
        </authorList>
    </citation>
    <scope>NUCLEOTIDE SEQUENCE [GENOMIC DNA] OF 1-48</scope>
</reference>
<name>NU5M_STRCA</name>
<gene>
    <name type="primary">MT-ND5</name>
    <name type="synonym">MTND5</name>
    <name type="synonym">NADH5</name>
    <name type="synonym">ND5</name>
</gene>
<sequence length="605" mass="66436">METTLLFNTSLLLTLMILLTPILLPLLSTKLQNTPLIITTTVKMAFFTSIIPTTIFIYSGTEAIISHWYWSFTPNLKIPLSFKMDQYSMLFLPVALFVTWSILQFAMWYMASEPHVTKFFIYLLMFLIAMLTLTIANNMFMLFIGWEGVGIMSFLLISWWHGRAEANTAALQAVIYNRIGDVGLILSMAWLASTLNTWEIQQISYESQTPILPLLGLILAATGKSAQFGLHPWLPAAMEGPTPVSALLHSSTMVVAGIFLLVRIHPLLANNQTALTTCLCLGALSTLFAATCALTQNDIKKIIAFSTSSQLGLMMVTIGLNLPQLAFLHISTHAFFKAMLFLCSGSIIHSLAGEQDIRKMGGLQKLLPTTTSCLTIGNLALMGTPFLAGFYSKDLIIESLNNSYLNAWALLLTLLATSFTATYSLRMTLMVQSGFSRIPPITPINENTPLVINPITRLALGSIMAGLLITSNILPTKTPPMTMPTIMKTAAIVVTILGILLALELSNMTHNLTAPKQNIYSNFSTTLGYFNPLAHRLSSMKLLNNGQKIASHLIDLSWYKKMGPEGLADLQLMAAKTSTPLHTGLIKTYLGTFALSILILLTLTH</sequence>
<evidence type="ECO:0000250" key="1"/>
<evidence type="ECO:0000255" key="2"/>
<evidence type="ECO:0000305" key="3"/>
<comment type="function">
    <text evidence="1">Core subunit of the mitochondrial membrane respiratory chain NADH dehydrogenase (Complex I) that is believed to belong to the minimal assembly required for catalysis. Complex I functions in the transfer of electrons from NADH to the respiratory chain. The immediate electron acceptor for the enzyme is believed to be ubiquinone (By similarity).</text>
</comment>
<comment type="catalytic activity">
    <reaction>
        <text>a ubiquinone + NADH + 5 H(+)(in) = a ubiquinol + NAD(+) + 4 H(+)(out)</text>
        <dbReference type="Rhea" id="RHEA:29091"/>
        <dbReference type="Rhea" id="RHEA-COMP:9565"/>
        <dbReference type="Rhea" id="RHEA-COMP:9566"/>
        <dbReference type="ChEBI" id="CHEBI:15378"/>
        <dbReference type="ChEBI" id="CHEBI:16389"/>
        <dbReference type="ChEBI" id="CHEBI:17976"/>
        <dbReference type="ChEBI" id="CHEBI:57540"/>
        <dbReference type="ChEBI" id="CHEBI:57945"/>
        <dbReference type="EC" id="7.1.1.2"/>
    </reaction>
</comment>
<comment type="subcellular location">
    <subcellularLocation>
        <location evidence="1">Mitochondrion inner membrane</location>
        <topology evidence="1">Multi-pass membrane protein</topology>
    </subcellularLocation>
</comment>
<comment type="similarity">
    <text evidence="3">Belongs to the complex I subunit 5 family.</text>
</comment>
<feature type="chain" id="PRO_0000118152" description="NADH-ubiquinone oxidoreductase chain 5">
    <location>
        <begin position="1"/>
        <end position="605"/>
    </location>
</feature>
<feature type="transmembrane region" description="Helical" evidence="2">
    <location>
        <begin position="5"/>
        <end position="25"/>
    </location>
</feature>
<feature type="transmembrane region" description="Helical" evidence="2">
    <location>
        <begin position="45"/>
        <end position="65"/>
    </location>
</feature>
<feature type="transmembrane region" description="Helical" evidence="2">
    <location>
        <begin position="89"/>
        <end position="109"/>
    </location>
</feature>
<feature type="transmembrane region" description="Helical" evidence="2">
    <location>
        <begin position="116"/>
        <end position="136"/>
    </location>
</feature>
<feature type="transmembrane region" description="Helical" evidence="2">
    <location>
        <begin position="140"/>
        <end position="160"/>
    </location>
</feature>
<feature type="transmembrane region" description="Helical" evidence="2">
    <location>
        <begin position="179"/>
        <end position="199"/>
    </location>
</feature>
<feature type="transmembrane region" description="Helical" evidence="2">
    <location>
        <begin position="210"/>
        <end position="230"/>
    </location>
</feature>
<feature type="transmembrane region" description="Helical" evidence="2">
    <location>
        <begin position="242"/>
        <end position="262"/>
    </location>
</feature>
<feature type="transmembrane region" description="Helical" evidence="2">
    <location>
        <begin position="274"/>
        <end position="294"/>
    </location>
</feature>
<feature type="transmembrane region" description="Helical" evidence="2">
    <location>
        <begin position="302"/>
        <end position="320"/>
    </location>
</feature>
<feature type="transmembrane region" description="Helical" evidence="2">
    <location>
        <begin position="333"/>
        <end position="353"/>
    </location>
</feature>
<feature type="transmembrane region" description="Helical" evidence="2">
    <location>
        <begin position="371"/>
        <end position="391"/>
    </location>
</feature>
<feature type="transmembrane region" description="Helical" evidence="2">
    <location>
        <begin position="405"/>
        <end position="425"/>
    </location>
</feature>
<feature type="transmembrane region" description="Helical" evidence="2">
    <location>
        <begin position="449"/>
        <end position="469"/>
    </location>
</feature>
<feature type="transmembrane region" description="Helical" evidence="2">
    <location>
        <begin position="483"/>
        <end position="503"/>
    </location>
</feature>
<feature type="transmembrane region" description="Helical" evidence="2">
    <location>
        <begin position="583"/>
        <end position="603"/>
    </location>
</feature>
<keyword id="KW-0249">Electron transport</keyword>
<keyword id="KW-0472">Membrane</keyword>
<keyword id="KW-0496">Mitochondrion</keyword>
<keyword id="KW-0999">Mitochondrion inner membrane</keyword>
<keyword id="KW-0520">NAD</keyword>
<keyword id="KW-0679">Respiratory chain</keyword>
<keyword id="KW-1278">Translocase</keyword>
<keyword id="KW-0812">Transmembrane</keyword>
<keyword id="KW-1133">Transmembrane helix</keyword>
<keyword id="KW-0813">Transport</keyword>
<keyword id="KW-0830">Ubiquinone</keyword>
<geneLocation type="mitochondrion"/>
<dbReference type="EC" id="7.1.1.2"/>
<dbReference type="EMBL" id="Y12025">
    <property type="protein sequence ID" value="CAA72754.1"/>
    <property type="molecule type" value="Genomic_DNA"/>
</dbReference>
<dbReference type="EMBL" id="AF338715">
    <property type="protein sequence ID" value="AAK53356.1"/>
    <property type="molecule type" value="Genomic_DNA"/>
</dbReference>
<dbReference type="EMBL" id="D38186">
    <property type="protein sequence ID" value="BAA07379.1"/>
    <property type="molecule type" value="Genomic_DNA"/>
</dbReference>
<dbReference type="PIR" id="C90613">
    <property type="entry name" value="C90613"/>
</dbReference>
<dbReference type="PIR" id="T11529">
    <property type="entry name" value="T11529"/>
</dbReference>
<dbReference type="RefSeq" id="NP_115451.1">
    <property type="nucleotide sequence ID" value="NC_002785.1"/>
</dbReference>
<dbReference type="SMR" id="Q35813"/>
<dbReference type="GeneID" id="803275"/>
<dbReference type="CTD" id="4540"/>
<dbReference type="GO" id="GO:0005743">
    <property type="term" value="C:mitochondrial inner membrane"/>
    <property type="evidence" value="ECO:0007669"/>
    <property type="project" value="UniProtKB-SubCell"/>
</dbReference>
<dbReference type="GO" id="GO:0008137">
    <property type="term" value="F:NADH dehydrogenase (ubiquinone) activity"/>
    <property type="evidence" value="ECO:0007669"/>
    <property type="project" value="UniProtKB-EC"/>
</dbReference>
<dbReference type="GO" id="GO:0042773">
    <property type="term" value="P:ATP synthesis coupled electron transport"/>
    <property type="evidence" value="ECO:0007669"/>
    <property type="project" value="InterPro"/>
</dbReference>
<dbReference type="GO" id="GO:0015990">
    <property type="term" value="P:electron transport coupled proton transport"/>
    <property type="evidence" value="ECO:0007669"/>
    <property type="project" value="TreeGrafter"/>
</dbReference>
<dbReference type="InterPro" id="IPR010934">
    <property type="entry name" value="NADH_DH_su5_C"/>
</dbReference>
<dbReference type="InterPro" id="IPR018393">
    <property type="entry name" value="NADHpl_OxRdtase_5_subgr"/>
</dbReference>
<dbReference type="InterPro" id="IPR001750">
    <property type="entry name" value="ND/Mrp_TM"/>
</dbReference>
<dbReference type="InterPro" id="IPR003945">
    <property type="entry name" value="NU5C-like"/>
</dbReference>
<dbReference type="InterPro" id="IPR001516">
    <property type="entry name" value="Proton_antipo_N"/>
</dbReference>
<dbReference type="NCBIfam" id="TIGR01974">
    <property type="entry name" value="NDH_I_L"/>
    <property type="match status" value="1"/>
</dbReference>
<dbReference type="PANTHER" id="PTHR42829">
    <property type="entry name" value="NADH-UBIQUINONE OXIDOREDUCTASE CHAIN 5"/>
    <property type="match status" value="1"/>
</dbReference>
<dbReference type="PANTHER" id="PTHR42829:SF2">
    <property type="entry name" value="NADH-UBIQUINONE OXIDOREDUCTASE CHAIN 5"/>
    <property type="match status" value="1"/>
</dbReference>
<dbReference type="Pfam" id="PF06455">
    <property type="entry name" value="NADH5_C"/>
    <property type="match status" value="1"/>
</dbReference>
<dbReference type="Pfam" id="PF00361">
    <property type="entry name" value="Proton_antipo_M"/>
    <property type="match status" value="1"/>
</dbReference>
<dbReference type="Pfam" id="PF00662">
    <property type="entry name" value="Proton_antipo_N"/>
    <property type="match status" value="1"/>
</dbReference>
<dbReference type="PRINTS" id="PR01434">
    <property type="entry name" value="NADHDHGNASE5"/>
</dbReference>